<dbReference type="EC" id="2.7.1.134" evidence="3 7 9"/>
<dbReference type="EC" id="2.7.1.159" evidence="3 9 11"/>
<dbReference type="EMBL" id="U51336">
    <property type="protein sequence ID" value="AAC50483.1"/>
    <property type="molecule type" value="mRNA"/>
</dbReference>
<dbReference type="EMBL" id="AF279372">
    <property type="protein sequence ID" value="AAG44835.1"/>
    <property type="molecule type" value="mRNA"/>
</dbReference>
<dbReference type="EMBL" id="BC003622">
    <property type="protein sequence ID" value="AAH03622.1"/>
    <property type="molecule type" value="mRNA"/>
</dbReference>
<dbReference type="EMBL" id="BC007428">
    <property type="protein sequence ID" value="AAH07428.1"/>
    <property type="molecule type" value="mRNA"/>
</dbReference>
<dbReference type="EMBL" id="BC018192">
    <property type="protein sequence ID" value="AAH18192.1"/>
    <property type="molecule type" value="mRNA"/>
</dbReference>
<dbReference type="CCDS" id="CCDS45157.1">
    <molecule id="Q13572-2"/>
</dbReference>
<dbReference type="CCDS" id="CCDS9907.1">
    <molecule id="Q13572-1"/>
</dbReference>
<dbReference type="RefSeq" id="NP_001136065.1">
    <molecule id="Q13572-1"/>
    <property type="nucleotide sequence ID" value="NM_001142593.3"/>
</dbReference>
<dbReference type="RefSeq" id="NP_001136066.1">
    <molecule id="Q13572-2"/>
    <property type="nucleotide sequence ID" value="NM_001142594.3"/>
</dbReference>
<dbReference type="RefSeq" id="NP_055031.2">
    <molecule id="Q13572-1"/>
    <property type="nucleotide sequence ID" value="NM_014216.5"/>
</dbReference>
<dbReference type="PDB" id="2ODT">
    <property type="method" value="X-ray"/>
    <property type="resolution" value="2.01 A"/>
    <property type="chains" value="X=1-327"/>
</dbReference>
<dbReference type="PDB" id="2Q7D">
    <property type="method" value="X-ray"/>
    <property type="resolution" value="1.60 A"/>
    <property type="chains" value="A/B=1-335"/>
</dbReference>
<dbReference type="PDB" id="2QB5">
    <property type="method" value="X-ray"/>
    <property type="resolution" value="1.80 A"/>
    <property type="chains" value="A/B=1-335"/>
</dbReference>
<dbReference type="PDB" id="9DN3">
    <property type="method" value="X-ray"/>
    <property type="resolution" value="2.25 A"/>
    <property type="chains" value="A=1-327"/>
</dbReference>
<dbReference type="PDBsum" id="2ODT"/>
<dbReference type="PDBsum" id="2Q7D"/>
<dbReference type="PDBsum" id="2QB5"/>
<dbReference type="PDBsum" id="9DN3"/>
<dbReference type="SMR" id="Q13572"/>
<dbReference type="BioGRID" id="109910">
    <property type="interactions" value="33"/>
</dbReference>
<dbReference type="DIP" id="DIP-60016N"/>
<dbReference type="FunCoup" id="Q13572">
    <property type="interactions" value="717"/>
</dbReference>
<dbReference type="IntAct" id="Q13572">
    <property type="interactions" value="14"/>
</dbReference>
<dbReference type="MINT" id="Q13572"/>
<dbReference type="STRING" id="9606.ENSP00000267615"/>
<dbReference type="BindingDB" id="Q13572"/>
<dbReference type="ChEMBL" id="CHEMBL1938220"/>
<dbReference type="iPTMnet" id="Q13572"/>
<dbReference type="PhosphoSitePlus" id="Q13572"/>
<dbReference type="BioMuta" id="ITPK1"/>
<dbReference type="DMDM" id="83288249"/>
<dbReference type="CPTAC" id="non-CPTAC-5664"/>
<dbReference type="jPOST" id="Q13572"/>
<dbReference type="MassIVE" id="Q13572"/>
<dbReference type="PaxDb" id="9606-ENSP00000267615"/>
<dbReference type="PeptideAtlas" id="Q13572"/>
<dbReference type="ProteomicsDB" id="59575">
    <molecule id="Q13572-1"/>
</dbReference>
<dbReference type="ProteomicsDB" id="59576">
    <molecule id="Q13572-2"/>
</dbReference>
<dbReference type="Pumba" id="Q13572"/>
<dbReference type="Antibodypedia" id="26868">
    <property type="antibodies" value="302 antibodies from 31 providers"/>
</dbReference>
<dbReference type="DNASU" id="3705"/>
<dbReference type="Ensembl" id="ENST00000267615.11">
    <molecule id="Q13572-1"/>
    <property type="protein sequence ID" value="ENSP00000267615.5"/>
    <property type="gene ID" value="ENSG00000100605.17"/>
</dbReference>
<dbReference type="Ensembl" id="ENST00000354313.7">
    <molecule id="Q13572-2"/>
    <property type="protein sequence ID" value="ENSP00000346272.3"/>
    <property type="gene ID" value="ENSG00000100605.17"/>
</dbReference>
<dbReference type="Ensembl" id="ENST00000556603.6">
    <molecule id="Q13572-1"/>
    <property type="protein sequence ID" value="ENSP00000451091.1"/>
    <property type="gene ID" value="ENSG00000100605.17"/>
</dbReference>
<dbReference type="Ensembl" id="ENST00000614271.3">
    <molecule id="Q13572-1"/>
    <property type="protein sequence ID" value="ENSP00000483767.1"/>
    <property type="gene ID" value="ENSG00000274958.4"/>
</dbReference>
<dbReference type="Ensembl" id="ENST00000617836.4">
    <molecule id="Q13572-2"/>
    <property type="protein sequence ID" value="ENSP00000480918.1"/>
    <property type="gene ID" value="ENSG00000274958.4"/>
</dbReference>
<dbReference type="Ensembl" id="ENST00000626153.2">
    <molecule id="Q13572-1"/>
    <property type="protein sequence ID" value="ENSP00000486991.1"/>
    <property type="gene ID" value="ENSG00000274958.4"/>
</dbReference>
<dbReference type="GeneID" id="3705"/>
<dbReference type="KEGG" id="hsa:3705"/>
<dbReference type="MANE-Select" id="ENST00000267615.11">
    <property type="protein sequence ID" value="ENSP00000267615.5"/>
    <property type="RefSeq nucleotide sequence ID" value="NM_014216.6"/>
    <property type="RefSeq protein sequence ID" value="NP_055031.2"/>
</dbReference>
<dbReference type="UCSC" id="uc001ybe.2">
    <molecule id="Q13572-1"/>
    <property type="organism name" value="human"/>
</dbReference>
<dbReference type="AGR" id="HGNC:6177"/>
<dbReference type="CTD" id="3705"/>
<dbReference type="DisGeNET" id="3705"/>
<dbReference type="GeneCards" id="ITPK1"/>
<dbReference type="HGNC" id="HGNC:6177">
    <property type="gene designation" value="ITPK1"/>
</dbReference>
<dbReference type="HPA" id="ENSG00000100605">
    <property type="expression patterns" value="Tissue enhanced (brain)"/>
</dbReference>
<dbReference type="MIM" id="601838">
    <property type="type" value="gene"/>
</dbReference>
<dbReference type="neXtProt" id="NX_Q13572"/>
<dbReference type="OpenTargets" id="ENSG00000100605"/>
<dbReference type="PharmGKB" id="PA29974"/>
<dbReference type="VEuPathDB" id="HostDB:ENSG00000100605"/>
<dbReference type="eggNOG" id="ENOG502QQS1">
    <property type="taxonomic scope" value="Eukaryota"/>
</dbReference>
<dbReference type="GeneTree" id="ENSGT00390000001278"/>
<dbReference type="HOGENOM" id="CLU_041857_1_1_1"/>
<dbReference type="InParanoid" id="Q13572"/>
<dbReference type="OMA" id="QHLYNRQ"/>
<dbReference type="OrthoDB" id="25308at2759"/>
<dbReference type="PAN-GO" id="Q13572">
    <property type="GO annotations" value="4 GO annotations based on evolutionary models"/>
</dbReference>
<dbReference type="PhylomeDB" id="Q13572"/>
<dbReference type="TreeFam" id="TF329288"/>
<dbReference type="BioCyc" id="MetaCyc:HS02123-MONOMER"/>
<dbReference type="BRENDA" id="2.7.1.134">
    <property type="organism ID" value="2681"/>
</dbReference>
<dbReference type="BRENDA" id="2.7.1.159">
    <property type="organism ID" value="2681"/>
</dbReference>
<dbReference type="PathwayCommons" id="Q13572"/>
<dbReference type="Reactome" id="R-HSA-1855167">
    <property type="pathway name" value="Synthesis of pyrophosphates in the cytosol"/>
</dbReference>
<dbReference type="Reactome" id="R-HSA-1855204">
    <property type="pathway name" value="Synthesis of IP3 and IP4 in the cytosol"/>
</dbReference>
<dbReference type="Reactome" id="R-HSA-983231">
    <property type="pathway name" value="Factors involved in megakaryocyte development and platelet production"/>
</dbReference>
<dbReference type="SABIO-RK" id="Q13572"/>
<dbReference type="SignaLink" id="Q13572"/>
<dbReference type="BioGRID-ORCS" id="3705">
    <property type="hits" value="106 hits in 1164 CRISPR screens"/>
</dbReference>
<dbReference type="ChiTaRS" id="ITPK1">
    <property type="organism name" value="human"/>
</dbReference>
<dbReference type="EvolutionaryTrace" id="Q13572"/>
<dbReference type="GeneWiki" id="ITPK1"/>
<dbReference type="GenomeRNAi" id="3705"/>
<dbReference type="Pharos" id="Q13572">
    <property type="development level" value="Tbio"/>
</dbReference>
<dbReference type="PRO" id="PR:Q13572"/>
<dbReference type="Proteomes" id="UP000005640">
    <property type="component" value="Chromosome 14"/>
</dbReference>
<dbReference type="RNAct" id="Q13572">
    <property type="molecule type" value="protein"/>
</dbReference>
<dbReference type="Bgee" id="ENSG00000100605">
    <property type="expression patterns" value="Expressed in C1 segment of cervical spinal cord and 104 other cell types or tissues"/>
</dbReference>
<dbReference type="ExpressionAtlas" id="Q13572">
    <property type="expression patterns" value="baseline and differential"/>
</dbReference>
<dbReference type="GO" id="GO:0016324">
    <property type="term" value="C:apical plasma membrane"/>
    <property type="evidence" value="ECO:0007669"/>
    <property type="project" value="Ensembl"/>
</dbReference>
<dbReference type="GO" id="GO:0005829">
    <property type="term" value="C:cytosol"/>
    <property type="evidence" value="ECO:0000304"/>
    <property type="project" value="Reactome"/>
</dbReference>
<dbReference type="GO" id="GO:0005524">
    <property type="term" value="F:ATP binding"/>
    <property type="evidence" value="ECO:0007669"/>
    <property type="project" value="UniProtKB-KW"/>
</dbReference>
<dbReference type="GO" id="GO:0003824">
    <property type="term" value="F:catalytic activity"/>
    <property type="evidence" value="ECO:0000304"/>
    <property type="project" value="ProtInc"/>
</dbReference>
<dbReference type="GO" id="GO:0016787">
    <property type="term" value="F:hydrolase activity"/>
    <property type="evidence" value="ECO:0007669"/>
    <property type="project" value="UniProtKB-KW"/>
</dbReference>
<dbReference type="GO" id="GO:0000825">
    <property type="term" value="F:inositol-1,3,4,5-tetrakisphosphate 6-kinase activity"/>
    <property type="evidence" value="ECO:0000315"/>
    <property type="project" value="UniProtKB"/>
</dbReference>
<dbReference type="GO" id="GO:0052726">
    <property type="term" value="F:inositol-1,3,4-trisphosphate 5-kinase activity"/>
    <property type="evidence" value="ECO:0000269"/>
    <property type="project" value="Reactome"/>
</dbReference>
<dbReference type="GO" id="GO:0052725">
    <property type="term" value="F:inositol-1,3,4-trisphosphate 6-kinase activity"/>
    <property type="evidence" value="ECO:0000269"/>
    <property type="project" value="Reactome"/>
</dbReference>
<dbReference type="GO" id="GO:0047325">
    <property type="term" value="F:inositol-3,4,5,6-tetrakisphosphate 1-kinase activity"/>
    <property type="evidence" value="ECO:0000269"/>
    <property type="project" value="Reactome"/>
</dbReference>
<dbReference type="GO" id="GO:0052835">
    <property type="term" value="F:inositol-3,4,6-trisphosphate 1-kinase activity"/>
    <property type="evidence" value="ECO:0007669"/>
    <property type="project" value="RHEA"/>
</dbReference>
<dbReference type="GO" id="GO:0016853">
    <property type="term" value="F:isomerase activity"/>
    <property type="evidence" value="ECO:0007669"/>
    <property type="project" value="UniProtKB-KW"/>
</dbReference>
<dbReference type="GO" id="GO:0000287">
    <property type="term" value="F:magnesium ion binding"/>
    <property type="evidence" value="ECO:0007669"/>
    <property type="project" value="InterPro"/>
</dbReference>
<dbReference type="GO" id="GO:0007596">
    <property type="term" value="P:blood coagulation"/>
    <property type="evidence" value="ECO:0000304"/>
    <property type="project" value="Reactome"/>
</dbReference>
<dbReference type="GO" id="GO:0032957">
    <property type="term" value="P:inositol trisphosphate metabolic process"/>
    <property type="evidence" value="ECO:0007669"/>
    <property type="project" value="InterPro"/>
</dbReference>
<dbReference type="GO" id="GO:0070266">
    <property type="term" value="P:necroptotic process"/>
    <property type="evidence" value="ECO:0000315"/>
    <property type="project" value="UniProtKB"/>
</dbReference>
<dbReference type="GO" id="GO:0021915">
    <property type="term" value="P:neural tube development"/>
    <property type="evidence" value="ECO:0007669"/>
    <property type="project" value="Ensembl"/>
</dbReference>
<dbReference type="GO" id="GO:0007165">
    <property type="term" value="P:signal transduction"/>
    <property type="evidence" value="ECO:0000304"/>
    <property type="project" value="ProtInc"/>
</dbReference>
<dbReference type="FunFam" id="3.30.1490.220:FF:000001">
    <property type="entry name" value="Inositol-tetrakisphosphate 1-kinase"/>
    <property type="match status" value="1"/>
</dbReference>
<dbReference type="FunFam" id="3.40.50.11370:FF:000001">
    <property type="entry name" value="Inositol-tetrakisphosphate 1-kinase"/>
    <property type="match status" value="1"/>
</dbReference>
<dbReference type="FunFam" id="3.30.470.20:FF:000047">
    <property type="entry name" value="Inositol-tetrakisphosphate 1-kinase 4"/>
    <property type="match status" value="1"/>
</dbReference>
<dbReference type="FunFam" id="3.40.50.11370:FF:000003">
    <property type="entry name" value="Inositol-tetrakisphosphate 1-kinase isoform a"/>
    <property type="match status" value="1"/>
</dbReference>
<dbReference type="Gene3D" id="3.30.1490.220">
    <property type="match status" value="1"/>
</dbReference>
<dbReference type="Gene3D" id="3.40.50.11370">
    <property type="match status" value="2"/>
</dbReference>
<dbReference type="InterPro" id="IPR011761">
    <property type="entry name" value="ATP-grasp"/>
</dbReference>
<dbReference type="InterPro" id="IPR008656">
    <property type="entry name" value="Inositol_tetrakis-P_1-kinase"/>
</dbReference>
<dbReference type="InterPro" id="IPR040464">
    <property type="entry name" value="InsP(3)kin_ATP-grasp"/>
</dbReference>
<dbReference type="InterPro" id="IPR041429">
    <property type="entry name" value="ITPK1_N"/>
</dbReference>
<dbReference type="PANTHER" id="PTHR14217">
    <property type="entry name" value="INOSITOL-TETRAKISPHOSPHATE 1-KINASE"/>
    <property type="match status" value="1"/>
</dbReference>
<dbReference type="PANTHER" id="PTHR14217:SF25">
    <property type="entry name" value="INOSITOL-TETRAKISPHOSPHATE 1-KINASE"/>
    <property type="match status" value="1"/>
</dbReference>
<dbReference type="Pfam" id="PF05770">
    <property type="entry name" value="Ins134_P3_kin"/>
    <property type="match status" value="1"/>
</dbReference>
<dbReference type="Pfam" id="PF17927">
    <property type="entry name" value="Ins134_P3_kin_N"/>
    <property type="match status" value="1"/>
</dbReference>
<dbReference type="SUPFAM" id="SSF56059">
    <property type="entry name" value="Glutathione synthetase ATP-binding domain-like"/>
    <property type="match status" value="1"/>
</dbReference>
<dbReference type="PROSITE" id="PS50975">
    <property type="entry name" value="ATP_GRASP"/>
    <property type="match status" value="1"/>
</dbReference>
<accession>Q13572</accession>
<accession>Q9BTL6</accession>
<accession>Q9H2E7</accession>
<keyword id="KW-0002">3D-structure</keyword>
<keyword id="KW-0007">Acetylation</keyword>
<keyword id="KW-0025">Alternative splicing</keyword>
<keyword id="KW-0067">ATP-binding</keyword>
<keyword id="KW-0378">Hydrolase</keyword>
<keyword id="KW-0413">Isomerase</keyword>
<keyword id="KW-0418">Kinase</keyword>
<keyword id="KW-0460">Magnesium</keyword>
<keyword id="KW-0479">Metal-binding</keyword>
<keyword id="KW-0547">Nucleotide-binding</keyword>
<keyword id="KW-0597">Phosphoprotein</keyword>
<keyword id="KW-1267">Proteomics identification</keyword>
<keyword id="KW-1185">Reference proteome</keyword>
<keyword id="KW-0808">Transferase</keyword>
<comment type="function">
    <text evidence="3 4 6 9 11">Kinase that can phosphorylate various inositol polyphosphate such as Ins(3,4,5,6)P4 or Ins(1,3,4)P3 (PubMed:11042108, PubMed:8662638). Phosphorylates Ins(3,4,5,6)P4 at position 1 to form Ins(1,3,4,5,6)P5 (PubMed:11042108). This reaction is thought to have regulatory importance, since Ins(3,4,5,6)P4 is an inhibitor of plasma membrane Ca(2+)-activated Cl(-) channels, while Ins(1,3,4,5,6)P5 is not. Also phosphorylates Ins(1,3,4)P3 on O-5 and O-6 to form Ins(1,3,4,6)P4, an essential molecule in the hexakisphosphate (InsP6) pathway (PubMed:11042108, PubMed:8662638). Also acts as an inositol polyphosphate phosphatase that dephosphorylates Ins(1,3,4,5)P4 and Ins(1,3,4,6)P4 to Ins(1,3,4)P3, and Ins(1,3,4,5,6)P5 to Ins(3,4,5,6)P4 (PubMed:11909533, PubMed:17616525). May also act as an isomerase that interconverts the inositol tetrakisphosphate isomers Ins(1,3,4,5)P4 and Ins(1,3,4,6)P4 in the presence of ADP and magnesium (PubMed:11909533). Probably acts as the rate-limiting enzyme of the InsP6 pathway. Modifies TNF-alpha-induced apoptosis by interfering with the activation of TNFRSF1A-associated death domain (PubMed:11909533, PubMed:12925536, PubMed:17616525). Plays an important role in MLKL-mediated necroptosis. Produces highly phosphorylated inositol phosphates such as inositolhexakisphosphate (InsP6) which bind to MLKL mediating the release of an N-terminal auto-inhibitory region leading to its activation. Essential for activated phospho-MLKL to oligomerize and localize to the cell membrane during necroptosis (PubMed:17616525).</text>
</comment>
<comment type="catalytic activity">
    <reaction evidence="3 7 9">
        <text>1D-myo-inositol 3,4,5,6-tetrakisphosphate + ATP = 1D-myo-inositol 1,3,4,5,6-pentakisphosphate + ADP + H(+)</text>
        <dbReference type="Rhea" id="RHEA:12452"/>
        <dbReference type="ChEBI" id="CHEBI:15378"/>
        <dbReference type="ChEBI" id="CHEBI:30616"/>
        <dbReference type="ChEBI" id="CHEBI:57539"/>
        <dbReference type="ChEBI" id="CHEBI:57733"/>
        <dbReference type="ChEBI" id="CHEBI:456216"/>
        <dbReference type="EC" id="2.7.1.134"/>
    </reaction>
    <physiologicalReaction direction="left-to-right" evidence="3 7">
        <dbReference type="Rhea" id="RHEA:12453"/>
    </physiologicalReaction>
    <physiologicalReaction direction="right-to-left" evidence="7 9">
        <dbReference type="Rhea" id="RHEA:12454"/>
    </physiologicalReaction>
</comment>
<comment type="catalytic activity">
    <reaction evidence="3 9 11">
        <text>1D-myo-inositol 1,3,4-trisphosphate + ATP = 1D-myo-inositol 1,3,4,5-tetrakisphosphate + ADP + H(+)</text>
        <dbReference type="Rhea" id="RHEA:13253"/>
        <dbReference type="ChEBI" id="CHEBI:15378"/>
        <dbReference type="ChEBI" id="CHEBI:30616"/>
        <dbReference type="ChEBI" id="CHEBI:57895"/>
        <dbReference type="ChEBI" id="CHEBI:58414"/>
        <dbReference type="ChEBI" id="CHEBI:456216"/>
        <dbReference type="EC" id="2.7.1.159"/>
    </reaction>
    <physiologicalReaction direction="left-to-right" evidence="9 11">
        <dbReference type="Rhea" id="RHEA:13254"/>
    </physiologicalReaction>
    <physiologicalReaction direction="right-to-left" evidence="9">
        <dbReference type="Rhea" id="RHEA:13255"/>
    </physiologicalReaction>
</comment>
<comment type="catalytic activity">
    <reaction evidence="3 9 11">
        <text>1D-myo-inositol 1,3,4-trisphosphate + ATP = 1D-myo-inositol 1,3,4,6-tetrakisphosphate + ADP + H(+)</text>
        <dbReference type="Rhea" id="RHEA:20940"/>
        <dbReference type="ChEBI" id="CHEBI:15378"/>
        <dbReference type="ChEBI" id="CHEBI:30616"/>
        <dbReference type="ChEBI" id="CHEBI:57660"/>
        <dbReference type="ChEBI" id="CHEBI:58414"/>
        <dbReference type="ChEBI" id="CHEBI:456216"/>
        <dbReference type="EC" id="2.7.1.159"/>
    </reaction>
    <physiologicalReaction direction="left-to-right" evidence="9 11">
        <dbReference type="Rhea" id="RHEA:20941"/>
    </physiologicalReaction>
    <physiologicalReaction direction="right-to-left" evidence="9">
        <dbReference type="Rhea" id="RHEA:20942"/>
    </physiologicalReaction>
</comment>
<comment type="catalytic activity">
    <reaction evidence="9">
        <text>1D-myo-inositol 3,4,6-trisphosphate + ATP = 1D-myo-inositol 1,3,4,6-tetrakisphosphate + ADP + H(+)</text>
        <dbReference type="Rhea" id="RHEA:70287"/>
        <dbReference type="ChEBI" id="CHEBI:15378"/>
        <dbReference type="ChEBI" id="CHEBI:30616"/>
        <dbReference type="ChEBI" id="CHEBI:57660"/>
        <dbReference type="ChEBI" id="CHEBI:189099"/>
        <dbReference type="ChEBI" id="CHEBI:456216"/>
    </reaction>
    <physiologicalReaction direction="left-to-right" evidence="9">
        <dbReference type="Rhea" id="RHEA:70288"/>
    </physiologicalReaction>
    <physiologicalReaction direction="right-to-left" evidence="9">
        <dbReference type="Rhea" id="RHEA:70289"/>
    </physiologicalReaction>
</comment>
<comment type="catalytic activity">
    <reaction evidence="9">
        <text>1D-myo-inositol 1,3,4-trisphosphate + 1D-myo-inositol 1,3,4,5,6-pentakisphosphate = 1D-myo-inositol 3,4,5,6-tetrakisphosphate + 1D-myo-inositol 1,3,4,6-tetrakisphosphate</text>
        <dbReference type="Rhea" id="RHEA:70263"/>
        <dbReference type="ChEBI" id="CHEBI:57539"/>
        <dbReference type="ChEBI" id="CHEBI:57660"/>
        <dbReference type="ChEBI" id="CHEBI:57733"/>
        <dbReference type="ChEBI" id="CHEBI:58414"/>
    </reaction>
    <physiologicalReaction direction="left-to-right" evidence="9">
        <dbReference type="Rhea" id="RHEA:70264"/>
    </physiologicalReaction>
    <physiologicalReaction direction="right-to-left" evidence="9">
        <dbReference type="Rhea" id="RHEA:70265"/>
    </physiologicalReaction>
</comment>
<comment type="catalytic activity">
    <reaction evidence="9">
        <text>1D-myo-inositol 1,3,4-trisphosphate + 1D-myo-inositol 1,3,4,5,6-pentakisphosphate = 1D-myo-inositol 3,4,5,6-tetrakisphosphate + 1D-myo-inositol 1,3,4,5-tetrakisphosphate</text>
        <dbReference type="Rhea" id="RHEA:70271"/>
        <dbReference type="ChEBI" id="CHEBI:57539"/>
        <dbReference type="ChEBI" id="CHEBI:57733"/>
        <dbReference type="ChEBI" id="CHEBI:57895"/>
        <dbReference type="ChEBI" id="CHEBI:58414"/>
    </reaction>
    <physiologicalReaction direction="left-to-right" evidence="9">
        <dbReference type="Rhea" id="RHEA:70272"/>
    </physiologicalReaction>
    <physiologicalReaction direction="right-to-left" evidence="9">
        <dbReference type="Rhea" id="RHEA:70273"/>
    </physiologicalReaction>
</comment>
<comment type="cofactor">
    <cofactor evidence="11">
        <name>Mg(2+)</name>
        <dbReference type="ChEBI" id="CHEBI:18420"/>
    </cofactor>
    <text evidence="11">Binds 2 magnesium ions per subunit.</text>
</comment>
<comment type="biophysicochemical properties">
    <kinetics>
        <KM evidence="3">0.3 uM for Ins(1,3,4)P3</KM>
        <KM evidence="3">0.1 uM for Ins(3,4,5,6)P4</KM>
        <KM evidence="7">0.05 uM for Ins(3,4,5,6)P4</KM>
        <KM evidence="7">0.03 uM for Ins(1,3,4,5,6)P5</KM>
        <Vmax evidence="3">320.0 pmol/min/ug enzyme with Ins(1,3,4)P3 as substrate</Vmax>
        <Vmax evidence="3">780.0 pmol/min/ug enzyme with Ins(3,4,5,6)P4 as substrate</Vmax>
        <Vmax evidence="7">220.0 nmol/min/mg enzyme with Ins(3,4,5,6)P4 as substrate</Vmax>
        <Vmax evidence="7">16.0 nmol/min/mg enzyme with Ins(1,3,4,5,6)P5 as substrate</Vmax>
    </kinetics>
</comment>
<comment type="subunit">
    <text evidence="5 9">Monomer. Interacts with GPS1/COPS1.</text>
</comment>
<comment type="interaction">
    <interactant intactId="EBI-751027">
        <id>Q13572</id>
    </interactant>
    <interactant intactId="EBI-11023114">
        <id>O95825</id>
        <label>CRYZL1</label>
    </interactant>
    <organismsDiffer>false</organismsDiffer>
    <experiments>2</experiments>
</comment>
<comment type="alternative products">
    <event type="alternative splicing"/>
    <isoform>
        <id>Q13572-1</id>
        <name>1</name>
        <sequence type="displayed"/>
    </isoform>
    <isoform>
        <id>Q13572-2</id>
        <name>2</name>
        <sequence type="described" ref="VSP_016478 VSP_016479"/>
    </isoform>
</comment>
<comment type="tissue specificity">
    <text evidence="11">Expressed in brain &gt; heart &gt; skeletal muscle = kidney = pancreas = liver = placenta &gt; lung. In brain, it is expressed in cerebellum, cerebral cortex, medulla, spinal cord, occipital lobe, frontal lobe, temporal lobe and putamen.</text>
</comment>
<comment type="PTM">
    <text evidence="10">Acetylation by EP300 and CREBBP destabilizes ITPK1, and down-regulates enzymatic activity. Deacetylated by SIRT1.</text>
</comment>
<comment type="similarity">
    <text evidence="13">Belongs to the ITPK1 family.</text>
</comment>
<comment type="caution">
    <text evidence="13">PubMed:11533064 detected some protein kinase activity and ability to phosphorylate transcription factors c-jun/JUN and ATF2. However, PubMed:15762844 showed that it does not have protein kinase activity.</text>
</comment>
<gene>
    <name evidence="14" type="primary">ITPK1</name>
</gene>
<reference key="1">
    <citation type="journal article" date="1996" name="J. Biol. Chem.">
        <title>Isolation of inositol 1,3,4-trisphosphate 5/6-kinase, cDNA cloning and expression of the recombinant enzyme.</title>
        <authorList>
            <person name="Wilson M.P."/>
            <person name="Majerus P.W."/>
        </authorList>
    </citation>
    <scope>NUCLEOTIDE SEQUENCE [MRNA] (ISOFORM 1)</scope>
    <scope>COFACTOR</scope>
    <scope>TISSUE SPECIFICITY</scope>
    <scope>CATALYTIC ACTIVITY</scope>
    <scope>FUNCTION</scope>
    <source>
        <tissue>Brain</tissue>
    </source>
</reference>
<reference key="2">
    <citation type="journal article" date="2000" name="Biochem. J.">
        <title>Multitasking in signal transduction by a promiscuous human Ins(3,4,5,6)P(4) 1-kinase/Ins(1,3,4)P(3) 5/6-kinase.</title>
        <authorList>
            <person name="Yang X."/>
            <person name="Shears S.B."/>
        </authorList>
    </citation>
    <scope>NUCLEOTIDE SEQUENCE [MRNA] (ISOFORM 1)</scope>
    <scope>BIOPHYSICOCHEMICAL PROPERTIES</scope>
    <scope>CATALYTIC ACTIVITY</scope>
    <scope>FUNCTION</scope>
</reference>
<reference key="3">
    <citation type="journal article" date="2004" name="Genome Res.">
        <title>The status, quality, and expansion of the NIH full-length cDNA project: the Mammalian Gene Collection (MGC).</title>
        <authorList>
            <consortium name="The MGC Project Team"/>
        </authorList>
    </citation>
    <scope>NUCLEOTIDE SEQUENCE [LARGE SCALE MRNA] (ISOFORMS 1 AND 2)</scope>
    <source>
        <tissue>Eye</tissue>
        <tissue>Muscle</tissue>
    </source>
</reference>
<reference key="4">
    <citation type="journal article" date="2001" name="J. Biol. Chem.">
        <title>Inositol 1,3,4-trisphosphate 5/6-kinase is a protein kinase that phosphorylates the transcription factors c-Jun and ATF-2.</title>
        <authorList>
            <person name="Wilson M.P."/>
            <person name="Sun Y."/>
            <person name="Cao L."/>
            <person name="Majerus P.W."/>
        </authorList>
    </citation>
    <scope>PUTATIVE FUNCTION AS PROTEIN KINASE</scope>
</reference>
<reference key="5">
    <citation type="journal article" date="2002" name="Curr. Biol.">
        <title>Regulation of Ins(3,4,5,6)P(4) signaling by a reversible kinase/phosphatase.</title>
        <authorList>
            <person name="Ho M.W.Y."/>
            <person name="Yang X."/>
            <person name="Carew M.A."/>
            <person name="Zhang T."/>
            <person name="Hua L."/>
            <person name="Kwon Y.-U."/>
            <person name="Chung S.-K."/>
            <person name="Adelt S."/>
            <person name="Vogel G."/>
            <person name="Riley A.M."/>
            <person name="Potter B.V.L."/>
            <person name="Shears S.B."/>
        </authorList>
    </citation>
    <scope>FUNCTION</scope>
</reference>
<reference key="6">
    <citation type="journal article" date="2002" name="J. Biol. Chem.">
        <title>Inositol 1,3,4-trisphosphate 5/6-kinase associates with the COP9 signalosome by binding to CSN1.</title>
        <authorList>
            <person name="Sun Y."/>
            <person name="Wilson M.P."/>
            <person name="Majerus P.W."/>
        </authorList>
    </citation>
    <scope>INTERACTION WITH GPS1</scope>
</reference>
<reference key="7">
    <citation type="journal article" date="2003" name="J. Biol. Chem.">
        <title>Inositol 1,3,4-trisphosphate 5/6-kinase inhibits tumor necrosis factor-induced apoptosis.</title>
        <authorList>
            <person name="Sun Y."/>
            <person name="Mochizuki Y."/>
            <person name="Majerus P.W."/>
        </authorList>
    </citation>
    <scope>FUNCTION</scope>
</reference>
<reference key="8">
    <citation type="journal article" date="2005" name="Biochem. J.">
        <title>The Ins(1,3,4)P3 5/6-kinase/Ins(3,4,5,6)P4 1-kinase is not a protein kinase.</title>
        <authorList>
            <person name="Qian X."/>
            <person name="Mitchell J."/>
            <person name="Wei S.J."/>
            <person name="Williams J."/>
            <person name="Petrovich R.M."/>
            <person name="Shears S.B."/>
        </authorList>
    </citation>
    <scope>MUTAGENESIS OF ARG-106; LYS-157; GLY-163; ASP-281; ASP-295 AND ASN-297</scope>
    <scope>CATALYTIC ACTIVITY</scope>
    <scope>BIOPHYSICOCHEMICAL PROPERTIES</scope>
</reference>
<reference key="9">
    <citation type="journal article" date="2005" name="Mol. Cell">
        <title>Specificity determinants in inositol polyphosphate synthesis: crystal structure of inositol 1,3,4-trisphosphate 5/6-kinase.</title>
        <authorList>
            <person name="Miller G.J."/>
            <person name="Wilson M.P."/>
            <person name="Majerus P.W."/>
            <person name="Hurley J.H."/>
        </authorList>
    </citation>
    <scope>MUTAGENESIS OF LYS-18; HIS-58; LYS-59; ARG-106; HIS-162; GLY-163; HIS-167; GLN-188; HIS-193; LYS-199; ARG-212; SER-214; LEU-215; ASN-297 AND GLY-301</scope>
</reference>
<reference key="10">
    <citation type="journal article" date="2011" name="BMC Syst. Biol.">
        <title>Initial characterization of the human central proteome.</title>
        <authorList>
            <person name="Burkard T.R."/>
            <person name="Planyavsky M."/>
            <person name="Kaupe I."/>
            <person name="Breitwieser F.P."/>
            <person name="Buerckstuemmer T."/>
            <person name="Bennett K.L."/>
            <person name="Superti-Furga G."/>
            <person name="Colinge J."/>
        </authorList>
    </citation>
    <scope>IDENTIFICATION BY MASS SPECTROMETRY [LARGE SCALE ANALYSIS]</scope>
</reference>
<reference key="11">
    <citation type="journal article" date="2012" name="Proc. Natl. Acad. Sci. U.S.A.">
        <title>N-terminal acetylome analyses and functional insights of the N-terminal acetyltransferase NatB.</title>
        <authorList>
            <person name="Van Damme P."/>
            <person name="Lasa M."/>
            <person name="Polevoda B."/>
            <person name="Gazquez C."/>
            <person name="Elosegui-Artola A."/>
            <person name="Kim D.S."/>
            <person name="De Juan-Pardo E."/>
            <person name="Demeyer K."/>
            <person name="Hole K."/>
            <person name="Larrea E."/>
            <person name="Timmerman E."/>
            <person name="Prieto J."/>
            <person name="Arnesen T."/>
            <person name="Sherman F."/>
            <person name="Gevaert K."/>
            <person name="Aldabe R."/>
        </authorList>
    </citation>
    <scope>IDENTIFICATION BY MASS SPECTROMETRY [LARGE SCALE ANALYSIS]</scope>
</reference>
<reference key="12">
    <citation type="journal article" date="2012" name="Proc. Natl. Acad. Sci. U.S.A.">
        <title>Regulation of inositol 1,3,4-trisphosphate 5/6-kinase (ITPK1) by reversible lysine acetylation.</title>
        <authorList>
            <person name="Zhang C."/>
            <person name="Majerus P.W."/>
            <person name="Wilson M.P."/>
        </authorList>
    </citation>
    <scope>ACETYLATION AT LYS-340; LYS-383 AND LYS-410</scope>
</reference>
<reference key="13">
    <citation type="journal article" date="2013" name="J. Proteome Res.">
        <title>Toward a comprehensive characterization of a human cancer cell phosphoproteome.</title>
        <authorList>
            <person name="Zhou H."/>
            <person name="Di Palma S."/>
            <person name="Preisinger C."/>
            <person name="Peng M."/>
            <person name="Polat A.N."/>
            <person name="Heck A.J."/>
            <person name="Mohammed S."/>
        </authorList>
    </citation>
    <scope>PHOSPHORYLATION [LARGE SCALE ANALYSIS] AT SER-396</scope>
    <scope>IDENTIFICATION BY MASS SPECTROMETRY [LARGE SCALE ANALYSIS]</scope>
    <source>
        <tissue>Erythroleukemia</tissue>
    </source>
</reference>
<reference key="14">
    <citation type="journal article" date="2018" name="Mol. Cell">
        <title>MLKL requires the inositol phosphate code to execute necroptosis.</title>
        <authorList>
            <person name="Dovey C.M."/>
            <person name="Diep J."/>
            <person name="Clarke B.P."/>
            <person name="Hale A.T."/>
            <person name="McNamara D.E."/>
            <person name="Guo H."/>
            <person name="Brown N.W. Jr."/>
            <person name="Cao J.Y."/>
            <person name="Grace C.R."/>
            <person name="Gough P.J."/>
            <person name="Bertin J."/>
            <person name="Dixon S.J."/>
            <person name="Fiedler D."/>
            <person name="Mocarski E.S."/>
            <person name="Kaiser W.J."/>
            <person name="Moldoveanu T."/>
            <person name="York J.D."/>
            <person name="Carette J.E."/>
        </authorList>
    </citation>
    <scope>FUNCTION</scope>
</reference>
<reference key="15">
    <citation type="journal article" date="2007" name="J. Biol. Chem.">
        <title>Integration of inositol phosphate signaling pathways via human ITPK1.</title>
        <authorList>
            <person name="Chamberlain P.P."/>
            <person name="Qian X."/>
            <person name="Stiles A.R."/>
            <person name="Cho J."/>
            <person name="Jones D.H."/>
            <person name="Lesley S.A."/>
            <person name="Grabau E.A."/>
            <person name="Shears S.B."/>
            <person name="Spraggon G."/>
        </authorList>
    </citation>
    <scope>X-RAY CRYSTALLOGRAPHY (1.6 ANGSTROMS) OF 1-335 IN COMPLEXES WITH MANGANESE; ATP ANALOG AND ADP</scope>
    <scope>FUNCTION</scope>
    <scope>SUBUNIT</scope>
    <scope>CATALYTIC ACTIVITY</scope>
</reference>
<reference key="16">
    <citation type="submission" date="2007-02" db="PDB data bank">
        <title>Structure of human inositol 1,3,4-trisphosphate 5/6-kinase.</title>
        <authorList>
            <consortium name="Structural genomics consortium (SGC)"/>
        </authorList>
    </citation>
    <scope>X-RAY CRYSTALLOGRAPHY (2.01 ANGSTROMS) OF 1-327</scope>
</reference>
<proteinExistence type="evidence at protein level"/>
<name>ITPK1_HUMAN</name>
<sequence>MQTFLKGKRVGYWLSEKKIKKLNFQAFAELCRKRGMEVVQLNLSRPIEEQGPLDVIIHKLTDVILEADQNDSQSLELVHRFQEYIDAHPETIVLDPLPAIRTLLDRSKSYELIRKIEAYMEDDRICSPPFMELTSLCGDDTMRLLEKNGLTFPFICKTRVAHGTNSHEMAIVFNQEGLNAIQPPCVVQNFINHNAVLYKVFVVGESYTVVQRPSLKNFSAGTSDRESIFFNSHNVSKPESSSVLTELDKIEGVFERPSDEVIRELSRALRQALGVSLFGIDIIINNQTGQHAVIDINAFPGYEGVSEFFTDLLNHIATVLQGQSTAMAATGDVALLRHSKLLAEPAGGLVGERTCSASPGCCGSMMGQDAPWKAEADAGGTAKLPHQRLGCNAGVSPSFQQHCVASLATKASSQ</sequence>
<organism>
    <name type="scientific">Homo sapiens</name>
    <name type="common">Human</name>
    <dbReference type="NCBI Taxonomy" id="9606"/>
    <lineage>
        <taxon>Eukaryota</taxon>
        <taxon>Metazoa</taxon>
        <taxon>Chordata</taxon>
        <taxon>Craniata</taxon>
        <taxon>Vertebrata</taxon>
        <taxon>Euteleostomi</taxon>
        <taxon>Mammalia</taxon>
        <taxon>Eutheria</taxon>
        <taxon>Euarchontoglires</taxon>
        <taxon>Primates</taxon>
        <taxon>Haplorrhini</taxon>
        <taxon>Catarrhini</taxon>
        <taxon>Hominidae</taxon>
        <taxon>Homo</taxon>
    </lineage>
</organism>
<feature type="chain" id="PRO_0000220833" description="Inositol-tetrakisphosphate 1-kinase">
    <location>
        <begin position="1"/>
        <end position="414"/>
    </location>
</feature>
<feature type="domain" description="ATP-grasp" evidence="2">
    <location>
        <begin position="117"/>
        <end position="325"/>
    </location>
</feature>
<feature type="binding site" evidence="1">
    <location>
        <position position="18"/>
    </location>
    <ligand>
        <name>1D-myo-inositol 1,3,4-trisphosphate</name>
        <dbReference type="ChEBI" id="CHEBI:58414"/>
    </ligand>
</feature>
<feature type="binding site">
    <location>
        <position position="106"/>
    </location>
    <ligand>
        <name>ATP</name>
        <dbReference type="ChEBI" id="CHEBI:30616"/>
    </ligand>
</feature>
<feature type="binding site">
    <location>
        <position position="157"/>
    </location>
    <ligand>
        <name>ATP</name>
        <dbReference type="ChEBI" id="CHEBI:30616"/>
    </ligand>
</feature>
<feature type="binding site" evidence="1">
    <location>
        <position position="167"/>
    </location>
    <ligand>
        <name>1D-myo-inositol 1,3,4-trisphosphate</name>
        <dbReference type="ChEBI" id="CHEBI:58414"/>
    </ligand>
</feature>
<feature type="binding site">
    <location>
        <begin position="188"/>
        <end position="199"/>
    </location>
    <ligand>
        <name>ATP</name>
        <dbReference type="ChEBI" id="CHEBI:30616"/>
    </ligand>
</feature>
<feature type="binding site" evidence="1">
    <location>
        <position position="199"/>
    </location>
    <ligand>
        <name>1D-myo-inositol 1,3,4-trisphosphate</name>
        <dbReference type="ChEBI" id="CHEBI:58414"/>
    </ligand>
</feature>
<feature type="binding site">
    <location>
        <position position="214"/>
    </location>
    <ligand>
        <name>ATP</name>
        <dbReference type="ChEBI" id="CHEBI:30616"/>
    </ligand>
</feature>
<feature type="binding site">
    <location>
        <position position="232"/>
    </location>
    <ligand>
        <name>ATP</name>
        <dbReference type="ChEBI" id="CHEBI:30616"/>
    </ligand>
</feature>
<feature type="binding site">
    <location>
        <position position="236"/>
    </location>
    <ligand>
        <name>ATP</name>
        <dbReference type="ChEBI" id="CHEBI:30616"/>
    </ligand>
</feature>
<feature type="binding site">
    <location>
        <position position="281"/>
    </location>
    <ligand>
        <name>Mg(2+)</name>
        <dbReference type="ChEBI" id="CHEBI:18420"/>
        <label>1</label>
    </ligand>
</feature>
<feature type="binding site">
    <location>
        <position position="295"/>
    </location>
    <ligand>
        <name>Mg(2+)</name>
        <dbReference type="ChEBI" id="CHEBI:18420"/>
        <label>1</label>
    </ligand>
</feature>
<feature type="binding site">
    <location>
        <position position="295"/>
    </location>
    <ligand>
        <name>Mg(2+)</name>
        <dbReference type="ChEBI" id="CHEBI:18420"/>
        <label>2</label>
    </ligand>
</feature>
<feature type="binding site" evidence="1">
    <location>
        <position position="297"/>
    </location>
    <ligand>
        <name>1D-myo-inositol 1,3,4-trisphosphate</name>
        <dbReference type="ChEBI" id="CHEBI:58414"/>
    </ligand>
</feature>
<feature type="binding site">
    <location>
        <position position="297"/>
    </location>
    <ligand>
        <name>Mg(2+)</name>
        <dbReference type="ChEBI" id="CHEBI:18420"/>
        <label>2</label>
    </ligand>
</feature>
<feature type="modified residue" description="N6-acetyllysine; by EP300 and CREBBP" evidence="10">
    <location>
        <position position="340"/>
    </location>
</feature>
<feature type="modified residue" description="N6-acetyllysine; by EP300 and CREBBP" evidence="10">
    <location>
        <position position="383"/>
    </location>
</feature>
<feature type="modified residue" description="Phosphoserine" evidence="15">
    <location>
        <position position="396"/>
    </location>
</feature>
<feature type="modified residue" description="N6-acetyllysine; by EP300 and CREBBP" evidence="10">
    <location>
        <position position="410"/>
    </location>
</feature>
<feature type="splice variant" id="VSP_016478" description="In isoform 2." evidence="12">
    <original>YEGVSEFFTDLLN</original>
    <variation>DCQVCFIEGWKTD</variation>
    <location>
        <begin position="302"/>
        <end position="314"/>
    </location>
</feature>
<feature type="splice variant" id="VSP_016479" description="In isoform 2." evidence="12">
    <location>
        <begin position="315"/>
        <end position="414"/>
    </location>
</feature>
<feature type="mutagenesis site" description="Loss of kinase activity." evidence="8">
    <original>K</original>
    <variation>A</variation>
    <location>
        <position position="18"/>
    </location>
</feature>
<feature type="mutagenesis site" description="No effect." evidence="8">
    <original>H</original>
    <variation>A</variation>
    <location>
        <position position="58"/>
    </location>
</feature>
<feature type="mutagenesis site" description="Loss of kinase activity." evidence="8">
    <original>K</original>
    <variation>A</variation>
    <location>
        <position position="59"/>
    </location>
</feature>
<feature type="mutagenesis site" description="Loss of kinase activity." evidence="7 8">
    <original>R</original>
    <variation>A</variation>
    <location>
        <position position="106"/>
    </location>
</feature>
<feature type="mutagenesis site" description="Loss of kinase activity." evidence="7">
    <original>K</original>
    <variation>A</variation>
    <location>
        <position position="157"/>
    </location>
</feature>
<feature type="mutagenesis site" description="Loss of kinase activity." evidence="8">
    <original>H</original>
    <variation>Q</variation>
    <location>
        <position position="162"/>
    </location>
</feature>
<feature type="mutagenesis site" description="Loss of kinase activity." evidence="7 8">
    <original>G</original>
    <variation>A</variation>
    <variation>P</variation>
    <location>
        <position position="163"/>
    </location>
</feature>
<feature type="mutagenesis site" description="No effect." evidence="7 8">
    <original>G</original>
    <variation>A</variation>
    <location>
        <position position="163"/>
    </location>
</feature>
<feature type="mutagenesis site" description="Loss of kinase activity." evidence="8">
    <original>H</original>
    <variation>A</variation>
    <variation>Q</variation>
    <location>
        <position position="167"/>
    </location>
</feature>
<feature type="mutagenesis site" description="No effect." evidence="8">
    <original>Q</original>
    <variation>A</variation>
    <location>
        <position position="188"/>
    </location>
</feature>
<feature type="mutagenesis site" description="Loss of kinase activity." evidence="8">
    <original>H</original>
    <variation>A</variation>
    <location>
        <position position="193"/>
    </location>
</feature>
<feature type="mutagenesis site" description="Loss of kinase activity." evidence="8">
    <original>K</original>
    <variation>A</variation>
    <location>
        <position position="199"/>
    </location>
</feature>
<feature type="mutagenesis site" description="Loss of kinase activity." evidence="8">
    <original>R</original>
    <variation>A</variation>
    <location>
        <position position="212"/>
    </location>
</feature>
<feature type="mutagenesis site" description="Loss of kinase activity." evidence="8">
    <original>S</original>
    <variation>A</variation>
    <location>
        <position position="214"/>
    </location>
</feature>
<feature type="mutagenesis site" description="No effect." evidence="8">
    <original>L</original>
    <variation>A</variation>
    <location>
        <position position="215"/>
    </location>
</feature>
<feature type="mutagenesis site" description="Loss of kinase activity." evidence="7">
    <original>D</original>
    <variation>A</variation>
    <location>
        <position position="281"/>
    </location>
</feature>
<feature type="mutagenesis site" description="Loss of kinase activity." evidence="7">
    <original>D</original>
    <variation>A</variation>
    <location>
        <position position="295"/>
    </location>
</feature>
<feature type="mutagenesis site" description="Loss of kinase activity." evidence="7 8">
    <original>N</original>
    <variation>A</variation>
    <variation>L</variation>
    <location>
        <position position="297"/>
    </location>
</feature>
<feature type="mutagenesis site" description="Induces a strong reduction in kinase activity." evidence="7 8">
    <original>N</original>
    <variation>D</variation>
    <location>
        <position position="297"/>
    </location>
</feature>
<feature type="mutagenesis site" description="Loss of kinase activity." evidence="8">
    <original>G</original>
    <variation>A</variation>
    <location>
        <position position="301"/>
    </location>
</feature>
<feature type="sequence conflict" description="In Ref. 1; AAC50483." evidence="13" ref="1">
    <original>S</original>
    <variation>N</variation>
    <location>
        <position position="356"/>
    </location>
</feature>
<feature type="helix" evidence="17">
    <location>
        <begin position="1"/>
        <end position="5"/>
    </location>
</feature>
<feature type="strand" evidence="17">
    <location>
        <begin position="9"/>
        <end position="13"/>
    </location>
</feature>
<feature type="helix" evidence="17">
    <location>
        <begin position="16"/>
        <end position="22"/>
    </location>
</feature>
<feature type="helix" evidence="17">
    <location>
        <begin position="24"/>
        <end position="32"/>
    </location>
</feature>
<feature type="turn" evidence="17">
    <location>
        <begin position="33"/>
        <end position="35"/>
    </location>
</feature>
<feature type="strand" evidence="17">
    <location>
        <begin position="37"/>
        <end position="40"/>
    </location>
</feature>
<feature type="helix" evidence="17">
    <location>
        <begin position="48"/>
        <end position="50"/>
    </location>
</feature>
<feature type="strand" evidence="17">
    <location>
        <begin position="54"/>
        <end position="58"/>
    </location>
</feature>
<feature type="helix" evidence="17">
    <location>
        <begin position="61"/>
        <end position="68"/>
    </location>
</feature>
<feature type="helix" evidence="17">
    <location>
        <begin position="72"/>
        <end position="87"/>
    </location>
</feature>
<feature type="strand" evidence="17">
    <location>
        <begin position="91"/>
        <end position="95"/>
    </location>
</feature>
<feature type="helix" evidence="17">
    <location>
        <begin position="97"/>
        <end position="102"/>
    </location>
</feature>
<feature type="helix" evidence="17">
    <location>
        <begin position="106"/>
        <end position="120"/>
    </location>
</feature>
<feature type="strand" evidence="17">
    <location>
        <begin position="130"/>
        <end position="133"/>
    </location>
</feature>
<feature type="helix" evidence="16">
    <location>
        <begin position="138"/>
        <end position="140"/>
    </location>
</feature>
<feature type="helix" evidence="17">
    <location>
        <begin position="141"/>
        <end position="147"/>
    </location>
</feature>
<feature type="strand" evidence="17">
    <location>
        <begin position="152"/>
        <end position="157"/>
    </location>
</feature>
<feature type="turn" evidence="18">
    <location>
        <begin position="164"/>
        <end position="167"/>
    </location>
</feature>
<feature type="strand" evidence="17">
    <location>
        <begin position="168"/>
        <end position="172"/>
    </location>
</feature>
<feature type="helix" evidence="17">
    <location>
        <begin position="175"/>
        <end position="177"/>
    </location>
</feature>
<feature type="strand" evidence="17">
    <location>
        <begin position="185"/>
        <end position="189"/>
    </location>
</feature>
<feature type="strand" evidence="17">
    <location>
        <begin position="196"/>
        <end position="203"/>
    </location>
</feature>
<feature type="strand" evidence="17">
    <location>
        <begin position="206"/>
        <end position="213"/>
    </location>
</feature>
<feature type="strand" evidence="17">
    <location>
        <begin position="228"/>
        <end position="231"/>
    </location>
</feature>
<feature type="helix" evidence="17">
    <location>
        <begin position="232"/>
        <end position="234"/>
    </location>
</feature>
<feature type="helix" evidence="17">
    <location>
        <begin position="243"/>
        <end position="245"/>
    </location>
</feature>
<feature type="helix" evidence="17">
    <location>
        <begin position="259"/>
        <end position="273"/>
    </location>
</feature>
<feature type="strand" evidence="17">
    <location>
        <begin position="277"/>
        <end position="284"/>
    </location>
</feature>
<feature type="turn" evidence="17">
    <location>
        <begin position="286"/>
        <end position="288"/>
    </location>
</feature>
<feature type="strand" evidence="17">
    <location>
        <begin position="291"/>
        <end position="299"/>
    </location>
</feature>
<feature type="helix" evidence="17">
    <location>
        <begin position="308"/>
        <end position="324"/>
    </location>
</feature>
<protein>
    <recommendedName>
        <fullName evidence="13">Inositol-tetrakisphosphate 1-kinase</fullName>
        <ecNumber evidence="3 7 9">2.7.1.134</ecNumber>
    </recommendedName>
    <alternativeName>
        <fullName>Inositol 1,3,4-trisphosphate 5/6-kinase</fullName>
        <shortName>Inositol-triphosphate 5/6-kinase</shortName>
        <shortName>Ins(1,3,4)P(3) 5/6-kinase</shortName>
        <ecNumber evidence="3 9 11">2.7.1.159</ecNumber>
    </alternativeName>
</protein>
<evidence type="ECO:0000250" key="1"/>
<evidence type="ECO:0000255" key="2">
    <source>
        <dbReference type="PROSITE-ProRule" id="PRU00409"/>
    </source>
</evidence>
<evidence type="ECO:0000269" key="3">
    <source>
    </source>
</evidence>
<evidence type="ECO:0000269" key="4">
    <source>
    </source>
</evidence>
<evidence type="ECO:0000269" key="5">
    <source>
    </source>
</evidence>
<evidence type="ECO:0000269" key="6">
    <source>
    </source>
</evidence>
<evidence type="ECO:0000269" key="7">
    <source>
    </source>
</evidence>
<evidence type="ECO:0000269" key="8">
    <source>
    </source>
</evidence>
<evidence type="ECO:0000269" key="9">
    <source>
    </source>
</evidence>
<evidence type="ECO:0000269" key="10">
    <source>
    </source>
</evidence>
<evidence type="ECO:0000269" key="11">
    <source>
    </source>
</evidence>
<evidence type="ECO:0000303" key="12">
    <source>
    </source>
</evidence>
<evidence type="ECO:0000305" key="13"/>
<evidence type="ECO:0000312" key="14">
    <source>
        <dbReference type="HGNC" id="HGNC:6177"/>
    </source>
</evidence>
<evidence type="ECO:0007744" key="15">
    <source>
    </source>
</evidence>
<evidence type="ECO:0007829" key="16">
    <source>
        <dbReference type="PDB" id="2ODT"/>
    </source>
</evidence>
<evidence type="ECO:0007829" key="17">
    <source>
        <dbReference type="PDB" id="2Q7D"/>
    </source>
</evidence>
<evidence type="ECO:0007829" key="18">
    <source>
        <dbReference type="PDB" id="2QB5"/>
    </source>
</evidence>